<comment type="function">
    <text evidence="1">Cleaves peptides in various proteins in a process that requires ATP hydrolysis. Has a chymotrypsin-like activity. Plays a major role in the degradation of misfolded proteins.</text>
</comment>
<comment type="catalytic activity">
    <reaction evidence="1">
        <text>Hydrolysis of proteins to small peptides in the presence of ATP and magnesium. alpha-casein is the usual test substrate. In the absence of ATP, only oligopeptides shorter than five residues are hydrolyzed (such as succinyl-Leu-Tyr-|-NHMec, and Leu-Tyr-Leu-|-Tyr-Trp, in which cleavage of the -Tyr-|-Leu- and -Tyr-|-Trp bonds also occurs).</text>
        <dbReference type="EC" id="3.4.21.92"/>
    </reaction>
</comment>
<comment type="subunit">
    <text>Component of the chloroplastic Clp protease core complex.</text>
</comment>
<comment type="subcellular location">
    <subcellularLocation>
        <location evidence="1">Plastid</location>
        <location evidence="1">Chloroplast stroma</location>
    </subcellularLocation>
</comment>
<comment type="similarity">
    <text evidence="1">Belongs to the peptidase S14 family.</text>
</comment>
<reference key="1">
    <citation type="journal article" date="2007" name="Am. Fern J.">
        <title>The complete plastid genome sequence of Angiopteris evecta (G. Forst.) Hoffm. (Marattiaceae).</title>
        <authorList>
            <person name="Roper J.M."/>
            <person name="Hansen S.K."/>
            <person name="Wolf P.G."/>
            <person name="Karol K.G."/>
            <person name="Mandoli D.F."/>
            <person name="Everett K.D.E."/>
            <person name="Kuehl J.V."/>
            <person name="Boore J.L."/>
        </authorList>
    </citation>
    <scope>NUCLEOTIDE SEQUENCE [LARGE SCALE GENOMIC DNA]</scope>
</reference>
<gene>
    <name evidence="1" type="primary">clpP</name>
</gene>
<dbReference type="EC" id="3.4.21.92" evidence="1"/>
<dbReference type="EMBL" id="DQ821119">
    <property type="protein sequence ID" value="ABG79625.1"/>
    <property type="molecule type" value="Genomic_DNA"/>
</dbReference>
<dbReference type="RefSeq" id="YP_001023726.1">
    <property type="nucleotide sequence ID" value="NC_008829.1"/>
</dbReference>
<dbReference type="SMR" id="A2T358"/>
<dbReference type="MEROPS" id="S14.002"/>
<dbReference type="GeneID" id="4788266"/>
<dbReference type="GO" id="GO:0009570">
    <property type="term" value="C:chloroplast stroma"/>
    <property type="evidence" value="ECO:0007669"/>
    <property type="project" value="UniProtKB-SubCell"/>
</dbReference>
<dbReference type="GO" id="GO:0009368">
    <property type="term" value="C:endopeptidase Clp complex"/>
    <property type="evidence" value="ECO:0007669"/>
    <property type="project" value="TreeGrafter"/>
</dbReference>
<dbReference type="GO" id="GO:0004176">
    <property type="term" value="F:ATP-dependent peptidase activity"/>
    <property type="evidence" value="ECO:0007669"/>
    <property type="project" value="InterPro"/>
</dbReference>
<dbReference type="GO" id="GO:0051117">
    <property type="term" value="F:ATPase binding"/>
    <property type="evidence" value="ECO:0007669"/>
    <property type="project" value="TreeGrafter"/>
</dbReference>
<dbReference type="GO" id="GO:0004252">
    <property type="term" value="F:serine-type endopeptidase activity"/>
    <property type="evidence" value="ECO:0007669"/>
    <property type="project" value="UniProtKB-UniRule"/>
</dbReference>
<dbReference type="GO" id="GO:0006515">
    <property type="term" value="P:protein quality control for misfolded or incompletely synthesized proteins"/>
    <property type="evidence" value="ECO:0007669"/>
    <property type="project" value="TreeGrafter"/>
</dbReference>
<dbReference type="CDD" id="cd07017">
    <property type="entry name" value="S14_ClpP_2"/>
    <property type="match status" value="1"/>
</dbReference>
<dbReference type="FunFam" id="3.90.226.10:FF:000006">
    <property type="entry name" value="ATP-dependent Clp protease proteolytic subunit"/>
    <property type="match status" value="1"/>
</dbReference>
<dbReference type="Gene3D" id="3.90.226.10">
    <property type="entry name" value="2-enoyl-CoA Hydratase, Chain A, domain 1"/>
    <property type="match status" value="1"/>
</dbReference>
<dbReference type="HAMAP" id="MF_00444">
    <property type="entry name" value="ClpP"/>
    <property type="match status" value="1"/>
</dbReference>
<dbReference type="InterPro" id="IPR001907">
    <property type="entry name" value="ClpP"/>
</dbReference>
<dbReference type="InterPro" id="IPR029045">
    <property type="entry name" value="ClpP/crotonase-like_dom_sf"/>
</dbReference>
<dbReference type="InterPro" id="IPR023562">
    <property type="entry name" value="ClpP/TepA"/>
</dbReference>
<dbReference type="InterPro" id="IPR033135">
    <property type="entry name" value="ClpP_His_AS"/>
</dbReference>
<dbReference type="InterPro" id="IPR018215">
    <property type="entry name" value="ClpP_Ser_AS"/>
</dbReference>
<dbReference type="PANTHER" id="PTHR10381">
    <property type="entry name" value="ATP-DEPENDENT CLP PROTEASE PROTEOLYTIC SUBUNIT"/>
    <property type="match status" value="1"/>
</dbReference>
<dbReference type="PANTHER" id="PTHR10381:SF15">
    <property type="entry name" value="CHLOROPLASTIC ATP-DEPENDENT CLP PROTEASE PROTEOLYTIC SUBUNIT 1"/>
    <property type="match status" value="1"/>
</dbReference>
<dbReference type="Pfam" id="PF00574">
    <property type="entry name" value="CLP_protease"/>
    <property type="match status" value="1"/>
</dbReference>
<dbReference type="PRINTS" id="PR00127">
    <property type="entry name" value="CLPPROTEASEP"/>
</dbReference>
<dbReference type="SUPFAM" id="SSF52096">
    <property type="entry name" value="ClpP/crotonase"/>
    <property type="match status" value="1"/>
</dbReference>
<dbReference type="PROSITE" id="PS00382">
    <property type="entry name" value="CLP_PROTEASE_HIS"/>
    <property type="match status" value="1"/>
</dbReference>
<dbReference type="PROSITE" id="PS00381">
    <property type="entry name" value="CLP_PROTEASE_SER"/>
    <property type="match status" value="1"/>
</dbReference>
<keyword id="KW-0150">Chloroplast</keyword>
<keyword id="KW-0378">Hydrolase</keyword>
<keyword id="KW-0934">Plastid</keyword>
<keyword id="KW-0645">Protease</keyword>
<keyword id="KW-0720">Serine protease</keyword>
<geneLocation type="chloroplast"/>
<accession>A2T358</accession>
<evidence type="ECO:0000255" key="1">
    <source>
        <dbReference type="HAMAP-Rule" id="MF_00444"/>
    </source>
</evidence>
<organism>
    <name type="scientific">Angiopteris evecta</name>
    <name type="common">Mule's foot fern</name>
    <name type="synonym">Polypodium evectum</name>
    <dbReference type="NCBI Taxonomy" id="13825"/>
    <lineage>
        <taxon>Eukaryota</taxon>
        <taxon>Viridiplantae</taxon>
        <taxon>Streptophyta</taxon>
        <taxon>Embryophyta</taxon>
        <taxon>Tracheophyta</taxon>
        <taxon>Polypodiopsida</taxon>
        <taxon>Marattiidae</taxon>
        <taxon>Marattiales</taxon>
        <taxon>Marattiaceae</taxon>
        <taxon>Angiopteris</taxon>
    </lineage>
</organism>
<protein>
    <recommendedName>
        <fullName evidence="1">ATP-dependent Clp protease proteolytic subunit</fullName>
        <ecNumber evidence="1">3.4.21.92</ecNumber>
    </recommendedName>
    <alternativeName>
        <fullName evidence="1">Endopeptidase Clp</fullName>
    </alternativeName>
</protein>
<name>CLPP_ANGEV</name>
<feature type="chain" id="PRO_0000309288" description="ATP-dependent Clp protease proteolytic subunit">
    <location>
        <begin position="1"/>
        <end position="197"/>
    </location>
</feature>
<feature type="active site" description="Nucleophile" evidence="1">
    <location>
        <position position="100"/>
    </location>
</feature>
<feature type="active site" evidence="1">
    <location>
        <position position="125"/>
    </location>
</feature>
<proteinExistence type="inferred from homology"/>
<sequence length="197" mass="21877">MPIGVPKVPFRLPGEEDAVWVDVNRLYRERLLFLGQQVDDEIANQLIGIMMYLNGEDETQDMYLYINSPGGAVLPGISVYDAMQFVVPDVHTICMGLAASMGSSILTGGEITKRIALPHARVMIHQPASSYYDGQAGECIMEAEEVLKLRDCITKVYVQRTGKPLWVISEDMERDVFMSAEEAKAYGIVDLIALETS</sequence>